<protein>
    <recommendedName>
        <fullName>Core histone macro-H2A.1</fullName>
        <shortName>Histone macroH2A1</shortName>
        <shortName>mH2A1</shortName>
    </recommendedName>
    <alternativeName>
        <fullName>H2A.y</fullName>
    </alternativeName>
    <alternativeName>
        <fullName>H2A/y</fullName>
    </alternativeName>
</protein>
<name>H2AY_RAT</name>
<gene>
    <name evidence="11" type="primary">Macroh2a1</name>
    <name evidence="11" type="synonym">H2afy</name>
</gene>
<keyword id="KW-0002">3D-structure</keyword>
<keyword id="KW-0007">Acetylation</keyword>
<keyword id="KW-0025">Alternative splicing</keyword>
<keyword id="KW-0156">Chromatin regulator</keyword>
<keyword id="KW-0158">Chromosome</keyword>
<keyword id="KW-0903">Direct protein sequencing</keyword>
<keyword id="KW-0238">DNA-binding</keyword>
<keyword id="KW-1017">Isopeptide bond</keyword>
<keyword id="KW-0488">Methylation</keyword>
<keyword id="KW-0544">Nucleosome core</keyword>
<keyword id="KW-0539">Nucleus</keyword>
<keyword id="KW-0597">Phosphoprotein</keyword>
<keyword id="KW-1185">Reference proteome</keyword>
<keyword id="KW-0832">Ubl conjugation</keyword>
<accession>Q02874</accession>
<accession>O09140</accession>
<accession>Q63325</accession>
<sequence length="368" mass="39040">MSSRGGKKKSTKTSRSAKAGVIFPVGRMLRYIKKGHPKYRIGVGAPVYMAAVLEYLTAEILELAGNAARDNKKGRVTPRHILLAVANDEELNQLLKGVTIASGGVLPNIHPELLAKKRGSKGKLEAIITPPPAKKAKSPSQKKPVAKKTGGKKGARKSKKQGEVSKAASADSTTEGAPTDGFTVLSTKSLFLGQKLQVVQADIASIDSDAVVHPTNADFYIGGEVGSTLEKKGGKEFVEAVLELRKKNGPLEVAGAAVSAGHGLPAKFVIHCNSPVWGADKCEELLEKTVKNCLALADDRKLKSIAFPSIGSGRNGFPKQTAAQLILKAISSYFVSTMSSSIKTVYFVLFDSESIGIYVQEMAKLDAN</sequence>
<reference key="1">
    <citation type="journal article" date="1992" name="Science">
        <title>MacroH2A, a core histone containing a large nonhistone region.</title>
        <authorList>
            <person name="Pehrson J.R."/>
            <person name="Fried V.A."/>
        </authorList>
    </citation>
    <scope>NUCLEOTIDE SEQUENCE [MRNA] (ISOFORMS 1 AND 2)</scope>
    <scope>PARTIAL PROTEIN SEQUENCE</scope>
    <source>
        <tissue>Liver</tissue>
    </source>
</reference>
<reference key="2">
    <citation type="submission" date="2006-02" db="EMBL/GenBank/DDBJ databases">
        <authorList>
            <person name="Pehrson J.R."/>
        </authorList>
    </citation>
    <scope>SEQUENCE REVISION (ISOFORM 1)</scope>
</reference>
<reference key="3">
    <citation type="journal article" date="1997" name="J. Cell. Biochem.">
        <title>Developmental and tissue expression patterns of histone macroH2A1 subtypes.</title>
        <authorList>
            <person name="Pehrson J.R."/>
            <person name="Costanzi C."/>
            <person name="Dharia C."/>
        </authorList>
    </citation>
    <scope>NUCLEOTIDE SEQUENCE [MRNA] (ISOFORM 2)</scope>
    <scope>TISSUE SPECIFICITY</scope>
    <source>
        <tissue>Thymus</tissue>
    </source>
</reference>
<reference key="4">
    <citation type="journal article" date="2004" name="Genome Res.">
        <title>The status, quality, and expansion of the NIH full-length cDNA project: the Mammalian Gene Collection (MGC).</title>
        <authorList>
            <consortium name="The MGC Project Team"/>
        </authorList>
    </citation>
    <scope>NUCLEOTIDE SEQUENCE [LARGE SCALE MRNA] (ISOFORM 2)</scope>
    <source>
        <strain>Brown Norway</strain>
        <tissue>Kidney</tissue>
    </source>
</reference>
<reference key="5">
    <citation type="journal article" date="2012" name="Nat. Commun.">
        <title>Quantitative maps of protein phosphorylation sites across 14 different rat organs and tissues.</title>
        <authorList>
            <person name="Lundby A."/>
            <person name="Secher A."/>
            <person name="Lage K."/>
            <person name="Nordsborg N.B."/>
            <person name="Dmytriyev A."/>
            <person name="Lundby C."/>
            <person name="Olsen J.V."/>
        </authorList>
    </citation>
    <scope>PHOSPHORYLATION [LARGE SCALE ANALYSIS] AT SER-169</scope>
    <scope>IDENTIFICATION BY MASS SPECTROMETRY [LARGE SCALE ANALYSIS]</scope>
</reference>
<reference key="6">
    <citation type="journal article" date="2005" name="Mol. Cell. Biol.">
        <title>Structural characterization of the histone variant macroH2A.</title>
        <authorList>
            <person name="Chakravarthy S."/>
            <person name="Gundimella S.K."/>
            <person name="Caron C."/>
            <person name="Perche P.-Y."/>
            <person name="Pehrson J.R."/>
            <person name="Khochbin S."/>
            <person name="Luger K."/>
        </authorList>
    </citation>
    <scope>X-RAY CRYSTALLOGRAPHY (1.6 ANGSTROMS) OF 181-371 (ISOFORM 1)</scope>
    <scope>FUNCTION</scope>
</reference>
<proteinExistence type="evidence at protein level"/>
<comment type="function">
    <text evidence="2 4 7">Variant histone H2A which replaces conventional H2A in a subset of nucleosomes where it represses transcription. Nucleosomes wrap and compact DNA into chromatin, limiting DNA accessibility to the cellular machineries which require DNA as a template (PubMed:16107708). Histones thereby play a central role in transcription regulation, DNA repair, DNA replication and chromosomal stability (PubMed:16107708). DNA accessibility is regulated via a complex set of post-translational modifications of histones, also called histone code, and nucleosome remodeling (PubMed:16107708). Involved in stable X chromosome inactivation. Inhibits the binding of transcription factors, including NF-kappa-B, and interferes with the activity of remodeling SWI/SNF complexes (By similarity). Inhibits histone acetylation by EP300 and recruits class I HDACs, which induces a hypoacetylated state of chromatin (By similarity).</text>
</comment>
<comment type="function">
    <molecule>Isoform 1</molecule>
    <text evidence="4">Isoform that specifically binds poly-ADP-ribose and O-acetyl-ADP-ribose and plays a key role in NAD(+) metabolism. Able to bind to the ends of poly-ADP-ribose chains created by PARP1 and cap them. This prevents PARP1 from further addition of ADP-ribose and thus limits the consumption of nuclear NAD(+), allowing the cell to maintain proper NAD(+) levels in both the nucleus and the mitochondria to promote proper mitochondrial respiration. Increases the expression of genes involved in redox metabolism, including SOD3.</text>
</comment>
<comment type="function">
    <molecule>Isoform 2</molecule>
    <text evidence="4">In contrast to isoform 1, does not bind poly-ADP-ribose. Represses SOD3 gene expression.</text>
</comment>
<comment type="subunit">
    <text evidence="2">The nucleosome is a histone octamer containing two molecules each of H2A, H2B, H3 and H4 assembled in one H3-H4 heterotetramer and two H2A-H2B heterodimers. Interacts with HDAC1 and HDAC2. Interacts with SPOP. Part of a complex consisting of MACROH2A1, CUL3 and SPOP.</text>
</comment>
<comment type="subunit">
    <molecule>Isoform 1</molecule>
    <text evidence="4">Interacts with PARP1.</text>
</comment>
<comment type="subcellular location">
    <subcellularLocation>
        <location evidence="2">Nucleus</location>
    </subcellularLocation>
    <subcellularLocation>
        <location evidence="2">Chromosome</location>
    </subcellularLocation>
    <text evidence="2">Enriched in inactive X chromosome chromatin and in senescence-associated heterochromatin. Recruited to DNA damage sites in an APLF-dependent manner.</text>
</comment>
<comment type="alternative products">
    <event type="alternative splicing"/>
    <isoform>
        <id>Q02874-2</id>
        <name>1</name>
        <name>mH2A1.1</name>
        <sequence type="displayed"/>
    </isoform>
    <isoform>
        <id>Q02874-1</id>
        <name>2</name>
        <name>mH2A1.2</name>
        <sequence type="described" ref="VSP_061612"/>
    </isoform>
</comment>
<comment type="tissue specificity">
    <molecule>Isoform 1</molecule>
    <text evidence="8">Present only in liver and brain (at protein level).</text>
</comment>
<comment type="tissue specificity">
    <molecule>Isoform 2</molecule>
    <text evidence="8">Present in brain, thymus, testis, liver and kidney (at protein level).</text>
</comment>
<comment type="domain">
    <molecule>Isoform 1</molecule>
    <text evidence="2">The macro domain specifically binds poly-ADP-ribose.</text>
</comment>
<comment type="PTM">
    <text evidence="2">Monoubiquitinated at either Lys-116 or Lys-117. May also be polyubiquitinated. Ubiquitination is mediated by the CUL3/SPOP E3 complex and does not promote proteasomal degradation. Instead, it is required for enrichment in inactive X chromosome chromatin.</text>
</comment>
<comment type="similarity">
    <text evidence="10">Belongs to the histone H2A family.</text>
</comment>
<feature type="chain" id="PRO_0000055319" description="Core histone macro-H2A.1">
    <location>
        <begin position="1"/>
        <end position="368"/>
    </location>
</feature>
<feature type="domain" description="Histone H2A">
    <location>
        <begin position="2"/>
        <end position="117"/>
    </location>
</feature>
<feature type="domain" description="Macro" evidence="5">
    <location>
        <begin position="183"/>
        <end position="366"/>
    </location>
</feature>
<feature type="region of interest" description="Disordered" evidence="6">
    <location>
        <begin position="128"/>
        <end position="179"/>
    </location>
</feature>
<feature type="compositionally biased region" description="Basic residues" evidence="6">
    <location>
        <begin position="144"/>
        <end position="159"/>
    </location>
</feature>
<feature type="binding site" evidence="1">
    <location>
        <position position="202"/>
    </location>
    <ligand>
        <name>a glycoprotein</name>
        <dbReference type="ChEBI" id="CHEBI:17089"/>
    </ligand>
    <ligandPart>
        <name>poly[(1''-&gt;2')-ADP-alpha-D-ribose] group</name>
        <dbReference type="ChEBI" id="CHEBI:157741"/>
    </ligandPart>
</feature>
<feature type="binding site" evidence="1">
    <location>
        <position position="203"/>
    </location>
    <ligand>
        <name>a glycoprotein</name>
        <dbReference type="ChEBI" id="CHEBI:17089"/>
    </ligand>
    <ligandPart>
        <name>poly[(1''-&gt;2')-ADP-alpha-D-ribose] group</name>
        <dbReference type="ChEBI" id="CHEBI:157741"/>
    </ligandPart>
</feature>
<feature type="binding site" evidence="1">
    <location>
        <position position="225"/>
    </location>
    <ligand>
        <name>a glycoprotein</name>
        <dbReference type="ChEBI" id="CHEBI:17089"/>
    </ligand>
    <ligandPart>
        <name>poly[(1''-&gt;2')-ADP-alpha-D-ribose] group</name>
        <dbReference type="ChEBI" id="CHEBI:157741"/>
    </ligandPart>
</feature>
<feature type="binding site" evidence="1">
    <location>
        <position position="274"/>
    </location>
    <ligand>
        <name>a glycoprotein</name>
        <dbReference type="ChEBI" id="CHEBI:17089"/>
    </ligand>
    <ligandPart>
        <name>poly[(1''-&gt;2')-ADP-alpha-D-ribose] group</name>
        <dbReference type="ChEBI" id="CHEBI:157741"/>
    </ligandPart>
</feature>
<feature type="binding site" evidence="1">
    <location>
        <position position="311"/>
    </location>
    <ligand>
        <name>a glycoprotein</name>
        <dbReference type="ChEBI" id="CHEBI:17089"/>
    </ligand>
    <ligandPart>
        <name>poly[(1''-&gt;2')-ADP-alpha-D-ribose] group</name>
        <dbReference type="ChEBI" id="CHEBI:157741"/>
    </ligandPart>
</feature>
<feature type="binding site" evidence="1">
    <location>
        <position position="312"/>
    </location>
    <ligand>
        <name>a glycoprotein</name>
        <dbReference type="ChEBI" id="CHEBI:17089"/>
    </ligand>
    <ligandPart>
        <name>poly[(1''-&gt;2')-ADP-alpha-D-ribose] group</name>
        <dbReference type="ChEBI" id="CHEBI:157741"/>
    </ligandPart>
</feature>
<feature type="binding site" evidence="1">
    <location>
        <position position="313"/>
    </location>
    <ligand>
        <name>a glycoprotein</name>
        <dbReference type="ChEBI" id="CHEBI:17089"/>
    </ligand>
    <ligandPart>
        <name>poly[(1''-&gt;2')-ADP-alpha-D-ribose] group</name>
        <dbReference type="ChEBI" id="CHEBI:157741"/>
    </ligandPart>
</feature>
<feature type="binding site" evidence="1">
    <location>
        <position position="315"/>
    </location>
    <ligand>
        <name>a glycoprotein</name>
        <dbReference type="ChEBI" id="CHEBI:17089"/>
    </ligand>
    <ligandPart>
        <name>poly[(1''-&gt;2')-ADP-alpha-D-ribose] group</name>
        <dbReference type="ChEBI" id="CHEBI:157741"/>
    </ligandPart>
</feature>
<feature type="modified residue" description="N6-lactoyllysine; alternate" evidence="3">
    <location>
        <position position="7"/>
    </location>
</feature>
<feature type="modified residue" description="N6-lactoyllysine; alternate" evidence="3">
    <location>
        <position position="9"/>
    </location>
</feature>
<feature type="modified residue" description="N6-methyllysine" evidence="2">
    <location>
        <position position="18"/>
    </location>
</feature>
<feature type="modified residue" description="N6-acetyllysine; alternate" evidence="4">
    <location>
        <position position="116"/>
    </location>
</feature>
<feature type="modified residue" description="N6,N6-dimethyllysine; alternate" evidence="2">
    <location>
        <position position="123"/>
    </location>
</feature>
<feature type="modified residue" description="N6-acetyllysine; alternate" evidence="4">
    <location>
        <position position="123"/>
    </location>
</feature>
<feature type="modified residue" description="Phosphothreonine" evidence="2">
    <location>
        <position position="129"/>
    </location>
</feature>
<feature type="modified residue" description="Phosphoserine" evidence="12">
    <location>
        <position position="169"/>
    </location>
</feature>
<feature type="modified residue" description="Phosphoserine" evidence="2">
    <location>
        <position position="172"/>
    </location>
</feature>
<feature type="cross-link" description="Glycyl lysine isopeptide (Lys-Gly) (interchain with G-Cter in ubiquitin); alternate" evidence="2">
    <location>
        <position position="116"/>
    </location>
</feature>
<feature type="cross-link" description="Glycyl lysine isopeptide (Lys-Gly) (interchain with G-Cter in ubiquitin)" evidence="2">
    <location>
        <position position="117"/>
    </location>
</feature>
<feature type="cross-link" description="Glycyl lysine isopeptide (Lys-Gly) (interchain with G-Cter in SUMO2); alternate" evidence="2">
    <location>
        <position position="123"/>
    </location>
</feature>
<feature type="cross-link" description="Glycyl lysine isopeptide (Lys-Gly) (interchain with G-Cter in SUMO2)" evidence="2">
    <location>
        <position position="166"/>
    </location>
</feature>
<feature type="cross-link" description="Glycyl lysine isopeptide (Lys-Gly) (interchain with G-Cter in SUMO2)" evidence="2">
    <location>
        <position position="188"/>
    </location>
</feature>
<feature type="cross-link" description="Glycyl lysine isopeptide (Lys-Gly) (interchain with G-Cter in SUMO2)" evidence="2">
    <location>
        <position position="319"/>
    </location>
</feature>
<feature type="splice variant" id="VSP_061612" description="In isoform 2." evidence="9">
    <original>QVVQADIASIDSDAVVHPTNADFYIGGEV</original>
    <variation>NLIHSEISNLAGFEVEAIINPTNADIDLKDDL</variation>
    <location>
        <begin position="197"/>
        <end position="225"/>
    </location>
</feature>
<feature type="strand" evidence="13">
    <location>
        <begin position="184"/>
        <end position="189"/>
    </location>
</feature>
<feature type="strand" evidence="13">
    <location>
        <begin position="195"/>
        <end position="199"/>
    </location>
</feature>
<feature type="helix" evidence="13">
    <location>
        <begin position="203"/>
        <end position="205"/>
    </location>
</feature>
<feature type="strand" evidence="13">
    <location>
        <begin position="209"/>
        <end position="214"/>
    </location>
</feature>
<feature type="helix" evidence="13">
    <location>
        <begin position="224"/>
        <end position="248"/>
    </location>
</feature>
<feature type="strand" evidence="13">
    <location>
        <begin position="256"/>
        <end position="260"/>
    </location>
</feature>
<feature type="strand" evidence="13">
    <location>
        <begin position="264"/>
        <end position="272"/>
    </location>
</feature>
<feature type="helix" evidence="13">
    <location>
        <begin position="282"/>
        <end position="299"/>
    </location>
</feature>
<feature type="strand" evidence="13">
    <location>
        <begin position="303"/>
        <end position="307"/>
    </location>
</feature>
<feature type="strand" evidence="13">
    <location>
        <begin position="311"/>
        <end position="313"/>
    </location>
</feature>
<feature type="helix" evidence="13">
    <location>
        <begin position="319"/>
        <end position="334"/>
    </location>
</feature>
<feature type="strand" evidence="13">
    <location>
        <begin position="344"/>
        <end position="348"/>
    </location>
</feature>
<feature type="helix" evidence="13">
    <location>
        <begin position="352"/>
        <end position="362"/>
    </location>
</feature>
<feature type="turn" evidence="13">
    <location>
        <begin position="363"/>
        <end position="366"/>
    </location>
</feature>
<organism>
    <name type="scientific">Rattus norvegicus</name>
    <name type="common">Rat</name>
    <dbReference type="NCBI Taxonomy" id="10116"/>
    <lineage>
        <taxon>Eukaryota</taxon>
        <taxon>Metazoa</taxon>
        <taxon>Chordata</taxon>
        <taxon>Craniata</taxon>
        <taxon>Vertebrata</taxon>
        <taxon>Euteleostomi</taxon>
        <taxon>Mammalia</taxon>
        <taxon>Eutheria</taxon>
        <taxon>Euarchontoglires</taxon>
        <taxon>Glires</taxon>
        <taxon>Rodentia</taxon>
        <taxon>Myomorpha</taxon>
        <taxon>Muroidea</taxon>
        <taxon>Muridae</taxon>
        <taxon>Murinae</taxon>
        <taxon>Rattus</taxon>
    </lineage>
</organism>
<evidence type="ECO:0000250" key="1">
    <source>
        <dbReference type="UniProtKB" id="A0A0D2UG83"/>
    </source>
</evidence>
<evidence type="ECO:0000250" key="2">
    <source>
        <dbReference type="UniProtKB" id="O75367"/>
    </source>
</evidence>
<evidence type="ECO:0000250" key="3">
    <source>
        <dbReference type="UniProtKB" id="P0C0S5"/>
    </source>
</evidence>
<evidence type="ECO:0000250" key="4">
    <source>
        <dbReference type="UniProtKB" id="Q9QZQ8"/>
    </source>
</evidence>
<evidence type="ECO:0000255" key="5">
    <source>
        <dbReference type="PROSITE-ProRule" id="PRU00490"/>
    </source>
</evidence>
<evidence type="ECO:0000256" key="6">
    <source>
        <dbReference type="SAM" id="MobiDB-lite"/>
    </source>
</evidence>
<evidence type="ECO:0000269" key="7">
    <source>
    </source>
</evidence>
<evidence type="ECO:0000269" key="8">
    <source>
    </source>
</evidence>
<evidence type="ECO:0000303" key="9">
    <source>
    </source>
</evidence>
<evidence type="ECO:0000305" key="10"/>
<evidence type="ECO:0000312" key="11">
    <source>
        <dbReference type="RGD" id="621462"/>
    </source>
</evidence>
<evidence type="ECO:0007744" key="12">
    <source>
    </source>
</evidence>
<evidence type="ECO:0007829" key="13">
    <source>
        <dbReference type="PDB" id="1YD9"/>
    </source>
</evidence>
<dbReference type="EMBL" id="M99065">
    <property type="protein sequence ID" value="AAA41561.2"/>
    <property type="molecule type" value="mRNA"/>
</dbReference>
<dbReference type="EMBL" id="M99066">
    <property type="protein sequence ID" value="AAA41560.1"/>
    <property type="molecule type" value="mRNA"/>
</dbReference>
<dbReference type="EMBL" id="U79139">
    <property type="protein sequence ID" value="AAB38330.1"/>
    <property type="molecule type" value="mRNA"/>
</dbReference>
<dbReference type="EMBL" id="BC089093">
    <property type="protein sequence ID" value="AAH89093.1"/>
    <property type="molecule type" value="mRNA"/>
</dbReference>
<dbReference type="PIR" id="I59567">
    <property type="entry name" value="I59567"/>
</dbReference>
<dbReference type="PIR" id="I80811">
    <property type="entry name" value="I80811"/>
</dbReference>
<dbReference type="RefSeq" id="NP_058878.1">
    <molecule id="Q02874-1"/>
    <property type="nucleotide sequence ID" value="NM_017182.3"/>
</dbReference>
<dbReference type="RefSeq" id="XP_006253638.1">
    <property type="nucleotide sequence ID" value="XM_006253576.3"/>
</dbReference>
<dbReference type="PDB" id="1YD9">
    <property type="method" value="X-ray"/>
    <property type="resolution" value="1.60 A"/>
    <property type="chains" value="A/B/C/D=226-368"/>
</dbReference>
<dbReference type="PDBsum" id="1YD9"/>
<dbReference type="SMR" id="Q02874"/>
<dbReference type="BioGRID" id="248036">
    <property type="interactions" value="2"/>
</dbReference>
<dbReference type="FunCoup" id="Q02874">
    <property type="interactions" value="1997"/>
</dbReference>
<dbReference type="IntAct" id="Q02874">
    <property type="interactions" value="1"/>
</dbReference>
<dbReference type="MINT" id="Q02874"/>
<dbReference type="STRING" id="10116.ENSRNOP00000049143"/>
<dbReference type="GlyGen" id="Q02874">
    <property type="glycosylation" value="1 site"/>
</dbReference>
<dbReference type="iPTMnet" id="Q02874"/>
<dbReference type="PhosphoSitePlus" id="Q02874"/>
<dbReference type="jPOST" id="Q02874"/>
<dbReference type="PaxDb" id="10116-ENSRNOP00000049143"/>
<dbReference type="Ensembl" id="ENSRNOT00000051702.7">
    <molecule id="Q02874-1"/>
    <property type="protein sequence ID" value="ENSRNOP00000049143.4"/>
    <property type="gene ID" value="ENSRNOG00000011523.9"/>
</dbReference>
<dbReference type="GeneID" id="29384"/>
<dbReference type="KEGG" id="rno:29384"/>
<dbReference type="UCSC" id="RGD:621462">
    <molecule id="Q02874-2"/>
    <property type="organism name" value="rat"/>
</dbReference>
<dbReference type="AGR" id="RGD:621462"/>
<dbReference type="CTD" id="9555"/>
<dbReference type="RGD" id="621462">
    <property type="gene designation" value="Macroh2a1"/>
</dbReference>
<dbReference type="eggNOG" id="KOG1756">
    <property type="taxonomic scope" value="Eukaryota"/>
</dbReference>
<dbReference type="eggNOG" id="KOG2633">
    <property type="taxonomic scope" value="Eukaryota"/>
</dbReference>
<dbReference type="GeneTree" id="ENSGT00940000159541"/>
<dbReference type="HOGENOM" id="CLU_062828_0_0_1"/>
<dbReference type="InParanoid" id="Q02874"/>
<dbReference type="OMA" id="GHHFPAK"/>
<dbReference type="PhylomeDB" id="Q02874"/>
<dbReference type="EvolutionaryTrace" id="Q02874"/>
<dbReference type="PRO" id="PR:Q02874"/>
<dbReference type="Proteomes" id="UP000002494">
    <property type="component" value="Chromosome 17"/>
</dbReference>
<dbReference type="Bgee" id="ENSRNOG00000011523">
    <property type="expression patterns" value="Expressed in thymus and 20 other cell types or tissues"/>
</dbReference>
<dbReference type="ExpressionAtlas" id="Q02874">
    <property type="expression patterns" value="baseline and differential"/>
</dbReference>
<dbReference type="GO" id="GO:0001740">
    <property type="term" value="C:Barr body"/>
    <property type="evidence" value="ECO:0000266"/>
    <property type="project" value="RGD"/>
</dbReference>
<dbReference type="GO" id="GO:0000785">
    <property type="term" value="C:chromatin"/>
    <property type="evidence" value="ECO:0000314"/>
    <property type="project" value="RGD"/>
</dbReference>
<dbReference type="GO" id="GO:0000793">
    <property type="term" value="C:condensed chromosome"/>
    <property type="evidence" value="ECO:0000266"/>
    <property type="project" value="RGD"/>
</dbReference>
<dbReference type="GO" id="GO:0000228">
    <property type="term" value="C:nuclear chromosome"/>
    <property type="evidence" value="ECO:0000266"/>
    <property type="project" value="RGD"/>
</dbReference>
<dbReference type="GO" id="GO:0005730">
    <property type="term" value="C:nucleolus"/>
    <property type="evidence" value="ECO:0000266"/>
    <property type="project" value="RGD"/>
</dbReference>
<dbReference type="GO" id="GO:0005654">
    <property type="term" value="C:nucleoplasm"/>
    <property type="evidence" value="ECO:0007669"/>
    <property type="project" value="Ensembl"/>
</dbReference>
<dbReference type="GO" id="GO:0000786">
    <property type="term" value="C:nucleosome"/>
    <property type="evidence" value="ECO:0000314"/>
    <property type="project" value="RGD"/>
</dbReference>
<dbReference type="GO" id="GO:0005634">
    <property type="term" value="C:nucleus"/>
    <property type="evidence" value="ECO:0000250"/>
    <property type="project" value="UniProtKB"/>
</dbReference>
<dbReference type="GO" id="GO:0005721">
    <property type="term" value="C:pericentric heterochromatin"/>
    <property type="evidence" value="ECO:0000266"/>
    <property type="project" value="RGD"/>
</dbReference>
<dbReference type="GO" id="GO:0090734">
    <property type="term" value="C:site of DNA damage"/>
    <property type="evidence" value="ECO:0000266"/>
    <property type="project" value="RGD"/>
</dbReference>
<dbReference type="GO" id="GO:0072570">
    <property type="term" value="F:ADP-D-ribose binding"/>
    <property type="evidence" value="ECO:0000250"/>
    <property type="project" value="UniProtKB"/>
</dbReference>
<dbReference type="GO" id="GO:0160002">
    <property type="term" value="F:ADP-D-ribose modification-dependent protein binding"/>
    <property type="evidence" value="ECO:0000250"/>
    <property type="project" value="UniProtKB"/>
</dbReference>
<dbReference type="GO" id="GO:0003682">
    <property type="term" value="F:chromatin binding"/>
    <property type="evidence" value="ECO:0000266"/>
    <property type="project" value="RGD"/>
</dbReference>
<dbReference type="GO" id="GO:0031490">
    <property type="term" value="F:chromatin DNA binding"/>
    <property type="evidence" value="ECO:0000266"/>
    <property type="project" value="RGD"/>
</dbReference>
<dbReference type="GO" id="GO:0010385">
    <property type="term" value="F:double-stranded methylated DNA binding"/>
    <property type="evidence" value="ECO:0000266"/>
    <property type="project" value="RGD"/>
</dbReference>
<dbReference type="GO" id="GO:0019899">
    <property type="term" value="F:enzyme binding"/>
    <property type="evidence" value="ECO:0000266"/>
    <property type="project" value="RGD"/>
</dbReference>
<dbReference type="GO" id="GO:0031492">
    <property type="term" value="F:nucleosomal DNA binding"/>
    <property type="evidence" value="ECO:0000266"/>
    <property type="project" value="RGD"/>
</dbReference>
<dbReference type="GO" id="GO:1990841">
    <property type="term" value="F:promoter-specific chromatin binding"/>
    <property type="evidence" value="ECO:0000266"/>
    <property type="project" value="RGD"/>
</dbReference>
<dbReference type="GO" id="GO:0046982">
    <property type="term" value="F:protein heterodimerization activity"/>
    <property type="evidence" value="ECO:0007669"/>
    <property type="project" value="InterPro"/>
</dbReference>
<dbReference type="GO" id="GO:0019901">
    <property type="term" value="F:protein kinase binding"/>
    <property type="evidence" value="ECO:0000266"/>
    <property type="project" value="RGD"/>
</dbReference>
<dbReference type="GO" id="GO:0030291">
    <property type="term" value="F:protein serine/threonine kinase inhibitor activity"/>
    <property type="evidence" value="ECO:0000266"/>
    <property type="project" value="RGD"/>
</dbReference>
<dbReference type="GO" id="GO:0000182">
    <property type="term" value="F:rDNA binding"/>
    <property type="evidence" value="ECO:0000266"/>
    <property type="project" value="RGD"/>
</dbReference>
<dbReference type="GO" id="GO:0000977">
    <property type="term" value="F:RNA polymerase II transcription regulatory region sequence-specific DNA binding"/>
    <property type="evidence" value="ECO:0000266"/>
    <property type="project" value="RGD"/>
</dbReference>
<dbReference type="GO" id="GO:0030527">
    <property type="term" value="F:structural constituent of chromatin"/>
    <property type="evidence" value="ECO:0000266"/>
    <property type="project" value="RGD"/>
</dbReference>
<dbReference type="GO" id="GO:0000976">
    <property type="term" value="F:transcription cis-regulatory region binding"/>
    <property type="evidence" value="ECO:0000266"/>
    <property type="project" value="RGD"/>
</dbReference>
<dbReference type="GO" id="GO:0006281">
    <property type="term" value="P:DNA repair"/>
    <property type="evidence" value="ECO:0000266"/>
    <property type="project" value="RGD"/>
</dbReference>
<dbReference type="GO" id="GO:0040029">
    <property type="term" value="P:epigenetic regulation of gene expression"/>
    <property type="evidence" value="ECO:0000266"/>
    <property type="project" value="RGD"/>
</dbReference>
<dbReference type="GO" id="GO:0071169">
    <property type="term" value="P:establishment of protein localization to chromatin"/>
    <property type="evidence" value="ECO:0000266"/>
    <property type="project" value="RGD"/>
</dbReference>
<dbReference type="GO" id="GO:0031507">
    <property type="term" value="P:heterochromatin formation"/>
    <property type="evidence" value="ECO:0000318"/>
    <property type="project" value="GO_Central"/>
</dbReference>
<dbReference type="GO" id="GO:1902750">
    <property type="term" value="P:negative regulation of cell cycle G2/M phase transition"/>
    <property type="evidence" value="ECO:0000266"/>
    <property type="project" value="RGD"/>
</dbReference>
<dbReference type="GO" id="GO:0045814">
    <property type="term" value="P:negative regulation of gene expression, epigenetic"/>
    <property type="evidence" value="ECO:0000266"/>
    <property type="project" value="RGD"/>
</dbReference>
<dbReference type="GO" id="GO:1904815">
    <property type="term" value="P:negative regulation of protein localization to chromosome, telomeric region"/>
    <property type="evidence" value="ECO:0000266"/>
    <property type="project" value="RGD"/>
</dbReference>
<dbReference type="GO" id="GO:0000122">
    <property type="term" value="P:negative regulation of transcription by RNA polymerase II"/>
    <property type="evidence" value="ECO:0000266"/>
    <property type="project" value="RGD"/>
</dbReference>
<dbReference type="GO" id="GO:1901837">
    <property type="term" value="P:negative regulation of transcription of nucleolar large rRNA by RNA polymerase I"/>
    <property type="evidence" value="ECO:0000266"/>
    <property type="project" value="RGD"/>
</dbReference>
<dbReference type="GO" id="GO:0006334">
    <property type="term" value="P:nucleosome assembly"/>
    <property type="evidence" value="ECO:0007669"/>
    <property type="project" value="InterPro"/>
</dbReference>
<dbReference type="GO" id="GO:1903226">
    <property type="term" value="P:positive regulation of endodermal cell differentiation"/>
    <property type="evidence" value="ECO:0000266"/>
    <property type="project" value="RGD"/>
</dbReference>
<dbReference type="GO" id="GO:0045618">
    <property type="term" value="P:positive regulation of keratinocyte differentiation"/>
    <property type="evidence" value="ECO:0000266"/>
    <property type="project" value="RGD"/>
</dbReference>
<dbReference type="GO" id="GO:0034184">
    <property type="term" value="P:positive regulation of maintenance of mitotic sister chromatid cohesion"/>
    <property type="evidence" value="ECO:0000266"/>
    <property type="project" value="RGD"/>
</dbReference>
<dbReference type="GO" id="GO:0019216">
    <property type="term" value="P:regulation of lipid metabolic process"/>
    <property type="evidence" value="ECO:0000266"/>
    <property type="project" value="RGD"/>
</dbReference>
<dbReference type="GO" id="GO:1902688">
    <property type="term" value="P:regulation of NAD metabolic process"/>
    <property type="evidence" value="ECO:0000250"/>
    <property type="project" value="UniProtKB"/>
</dbReference>
<dbReference type="GO" id="GO:0002082">
    <property type="term" value="P:regulation of oxidative phosphorylation"/>
    <property type="evidence" value="ECO:0000266"/>
    <property type="project" value="RGD"/>
</dbReference>
<dbReference type="GO" id="GO:1902882">
    <property type="term" value="P:regulation of response to oxidative stress"/>
    <property type="evidence" value="ECO:0000266"/>
    <property type="project" value="RGD"/>
</dbReference>
<dbReference type="GO" id="GO:0007549">
    <property type="term" value="P:sex-chromosome dosage compensation"/>
    <property type="evidence" value="ECO:0000266"/>
    <property type="project" value="RGD"/>
</dbReference>
<dbReference type="GO" id="GO:0045815">
    <property type="term" value="P:transcription initiation-coupled chromatin remodeling"/>
    <property type="evidence" value="ECO:0000266"/>
    <property type="project" value="RGD"/>
</dbReference>
<dbReference type="CDD" id="cd00074">
    <property type="entry name" value="HFD_H2A"/>
    <property type="match status" value="1"/>
</dbReference>
<dbReference type="CDD" id="cd02904">
    <property type="entry name" value="Macro_H2A-like"/>
    <property type="match status" value="1"/>
</dbReference>
<dbReference type="FunFam" id="1.10.20.10:FF:000013">
    <property type="entry name" value="Core histone macro-H2A"/>
    <property type="match status" value="1"/>
</dbReference>
<dbReference type="FunFam" id="3.40.220.10:FF:000002">
    <property type="entry name" value="Core histone macro-H2A"/>
    <property type="match status" value="1"/>
</dbReference>
<dbReference type="Gene3D" id="1.10.20.10">
    <property type="entry name" value="Histone, subunit A"/>
    <property type="match status" value="1"/>
</dbReference>
<dbReference type="Gene3D" id="3.40.220.10">
    <property type="entry name" value="Leucine Aminopeptidase, subunit E, domain 1"/>
    <property type="match status" value="1"/>
</dbReference>
<dbReference type="InterPro" id="IPR021171">
    <property type="entry name" value="Core_histone_macro-H2A"/>
</dbReference>
<dbReference type="InterPro" id="IPR009072">
    <property type="entry name" value="Histone-fold"/>
</dbReference>
<dbReference type="InterPro" id="IPR002119">
    <property type="entry name" value="Histone_H2A"/>
</dbReference>
<dbReference type="InterPro" id="IPR007125">
    <property type="entry name" value="Histone_H2A/H2B/H3"/>
</dbReference>
<dbReference type="InterPro" id="IPR032454">
    <property type="entry name" value="Histone_H2A_C"/>
</dbReference>
<dbReference type="InterPro" id="IPR002589">
    <property type="entry name" value="Macro_dom"/>
</dbReference>
<dbReference type="InterPro" id="IPR043472">
    <property type="entry name" value="Macro_dom-like"/>
</dbReference>
<dbReference type="InterPro" id="IPR035796">
    <property type="entry name" value="Macro_H2A"/>
</dbReference>
<dbReference type="PANTHER" id="PTHR23430">
    <property type="entry name" value="HISTONE H2A"/>
    <property type="match status" value="1"/>
</dbReference>
<dbReference type="Pfam" id="PF00125">
    <property type="entry name" value="Histone"/>
    <property type="match status" value="1"/>
</dbReference>
<dbReference type="Pfam" id="PF16211">
    <property type="entry name" value="Histone_H2A_C"/>
    <property type="match status" value="1"/>
</dbReference>
<dbReference type="Pfam" id="PF01661">
    <property type="entry name" value="Macro"/>
    <property type="match status" value="1"/>
</dbReference>
<dbReference type="PIRSF" id="PIRSF037942">
    <property type="entry name" value="Core_histone_macro-H2A"/>
    <property type="match status" value="1"/>
</dbReference>
<dbReference type="PRINTS" id="PR00620">
    <property type="entry name" value="HISTONEH2A"/>
</dbReference>
<dbReference type="SMART" id="SM00506">
    <property type="entry name" value="A1pp"/>
    <property type="match status" value="1"/>
</dbReference>
<dbReference type="SMART" id="SM00414">
    <property type="entry name" value="H2A"/>
    <property type="match status" value="1"/>
</dbReference>
<dbReference type="SUPFAM" id="SSF47113">
    <property type="entry name" value="Histone-fold"/>
    <property type="match status" value="1"/>
</dbReference>
<dbReference type="SUPFAM" id="SSF52949">
    <property type="entry name" value="Macro domain-like"/>
    <property type="match status" value="1"/>
</dbReference>
<dbReference type="PROSITE" id="PS51154">
    <property type="entry name" value="MACRO"/>
    <property type="match status" value="1"/>
</dbReference>